<comment type="function">
    <text evidence="1">Transfers the 4'-phosphopantetheine moiety from coenzyme A to a Ser of acyl-carrier-protein.</text>
</comment>
<comment type="catalytic activity">
    <reaction evidence="1">
        <text>apo-[ACP] + CoA = holo-[ACP] + adenosine 3',5'-bisphosphate + H(+)</text>
        <dbReference type="Rhea" id="RHEA:12068"/>
        <dbReference type="Rhea" id="RHEA-COMP:9685"/>
        <dbReference type="Rhea" id="RHEA-COMP:9690"/>
        <dbReference type="ChEBI" id="CHEBI:15378"/>
        <dbReference type="ChEBI" id="CHEBI:29999"/>
        <dbReference type="ChEBI" id="CHEBI:57287"/>
        <dbReference type="ChEBI" id="CHEBI:58343"/>
        <dbReference type="ChEBI" id="CHEBI:64479"/>
        <dbReference type="EC" id="2.7.8.7"/>
    </reaction>
</comment>
<comment type="cofactor">
    <cofactor evidence="1">
        <name>Mg(2+)</name>
        <dbReference type="ChEBI" id="CHEBI:18420"/>
    </cofactor>
</comment>
<comment type="subcellular location">
    <subcellularLocation>
        <location evidence="1">Cytoplasm</location>
    </subcellularLocation>
</comment>
<comment type="similarity">
    <text evidence="1">Belongs to the P-Pant transferase superfamily. AcpS family.</text>
</comment>
<organism>
    <name type="scientific">Limosilactobacillus reuteri (strain DSM 20016)</name>
    <name type="common">Lactobacillus reuteri</name>
    <dbReference type="NCBI Taxonomy" id="557436"/>
    <lineage>
        <taxon>Bacteria</taxon>
        <taxon>Bacillati</taxon>
        <taxon>Bacillota</taxon>
        <taxon>Bacilli</taxon>
        <taxon>Lactobacillales</taxon>
        <taxon>Lactobacillaceae</taxon>
        <taxon>Limosilactobacillus</taxon>
    </lineage>
</organism>
<proteinExistence type="inferred from homology"/>
<name>ACPS_LIMRD</name>
<feature type="chain" id="PRO_1000057671" description="Holo-[acyl-carrier-protein] synthase">
    <location>
        <begin position="1"/>
        <end position="120"/>
    </location>
</feature>
<feature type="binding site" evidence="1">
    <location>
        <position position="8"/>
    </location>
    <ligand>
        <name>Mg(2+)</name>
        <dbReference type="ChEBI" id="CHEBI:18420"/>
    </ligand>
</feature>
<feature type="binding site" evidence="1">
    <location>
        <position position="58"/>
    </location>
    <ligand>
        <name>Mg(2+)</name>
        <dbReference type="ChEBI" id="CHEBI:18420"/>
    </ligand>
</feature>
<sequence length="120" mass="13167">MIKGIGIDITEIERVKKAATAHSQFIQHVLTPTELEQYSQFSGQRSVEYLAGRWSLKESFAKAYGTGIGANLGFHDIEIIDNQYGAPIVTKSPYNGNAHASVSHTATLVMTEVILESENK</sequence>
<accession>A5VI50</accession>
<protein>
    <recommendedName>
        <fullName evidence="1">Holo-[acyl-carrier-protein] synthase</fullName>
        <shortName evidence="1">Holo-ACP synthase</shortName>
        <ecNumber evidence="1">2.7.8.7</ecNumber>
    </recommendedName>
    <alternativeName>
        <fullName evidence="1">4'-phosphopantetheinyl transferase AcpS</fullName>
    </alternativeName>
</protein>
<gene>
    <name evidence="1" type="primary">acpS</name>
    <name type="ordered locus">Lreu_0254</name>
</gene>
<evidence type="ECO:0000255" key="1">
    <source>
        <dbReference type="HAMAP-Rule" id="MF_00101"/>
    </source>
</evidence>
<dbReference type="EC" id="2.7.8.7" evidence="1"/>
<dbReference type="EMBL" id="CP000705">
    <property type="protein sequence ID" value="ABQ82524.1"/>
    <property type="molecule type" value="Genomic_DNA"/>
</dbReference>
<dbReference type="RefSeq" id="WP_003667247.1">
    <property type="nucleotide sequence ID" value="NC_009513.1"/>
</dbReference>
<dbReference type="SMR" id="A5VI50"/>
<dbReference type="STRING" id="557436.Lreu_0254"/>
<dbReference type="KEGG" id="lre:Lreu_0254"/>
<dbReference type="PATRIC" id="fig|557436.17.peg.898"/>
<dbReference type="eggNOG" id="COG0736">
    <property type="taxonomic scope" value="Bacteria"/>
</dbReference>
<dbReference type="HOGENOM" id="CLU_089696_1_2_9"/>
<dbReference type="Proteomes" id="UP000001991">
    <property type="component" value="Chromosome"/>
</dbReference>
<dbReference type="GO" id="GO:0005829">
    <property type="term" value="C:cytosol"/>
    <property type="evidence" value="ECO:0007669"/>
    <property type="project" value="TreeGrafter"/>
</dbReference>
<dbReference type="GO" id="GO:0008897">
    <property type="term" value="F:holo-[acyl-carrier-protein] synthase activity"/>
    <property type="evidence" value="ECO:0007669"/>
    <property type="project" value="UniProtKB-UniRule"/>
</dbReference>
<dbReference type="GO" id="GO:0000287">
    <property type="term" value="F:magnesium ion binding"/>
    <property type="evidence" value="ECO:0007669"/>
    <property type="project" value="UniProtKB-UniRule"/>
</dbReference>
<dbReference type="GO" id="GO:0006633">
    <property type="term" value="P:fatty acid biosynthetic process"/>
    <property type="evidence" value="ECO:0007669"/>
    <property type="project" value="UniProtKB-UniRule"/>
</dbReference>
<dbReference type="GO" id="GO:0019878">
    <property type="term" value="P:lysine biosynthetic process via aminoadipic acid"/>
    <property type="evidence" value="ECO:0007669"/>
    <property type="project" value="TreeGrafter"/>
</dbReference>
<dbReference type="Gene3D" id="3.90.470.20">
    <property type="entry name" value="4'-phosphopantetheinyl transferase domain"/>
    <property type="match status" value="1"/>
</dbReference>
<dbReference type="HAMAP" id="MF_00101">
    <property type="entry name" value="AcpS"/>
    <property type="match status" value="1"/>
</dbReference>
<dbReference type="InterPro" id="IPR008278">
    <property type="entry name" value="4-PPantetheinyl_Trfase_dom"/>
</dbReference>
<dbReference type="InterPro" id="IPR037143">
    <property type="entry name" value="4-PPantetheinyl_Trfase_dom_sf"/>
</dbReference>
<dbReference type="InterPro" id="IPR002582">
    <property type="entry name" value="ACPS"/>
</dbReference>
<dbReference type="InterPro" id="IPR050559">
    <property type="entry name" value="P-Pant_transferase_sf"/>
</dbReference>
<dbReference type="InterPro" id="IPR004568">
    <property type="entry name" value="Ppantetheine-prot_Trfase_dom"/>
</dbReference>
<dbReference type="NCBIfam" id="TIGR00516">
    <property type="entry name" value="acpS"/>
    <property type="match status" value="1"/>
</dbReference>
<dbReference type="NCBIfam" id="TIGR00556">
    <property type="entry name" value="pantethn_trn"/>
    <property type="match status" value="1"/>
</dbReference>
<dbReference type="PANTHER" id="PTHR12215:SF10">
    <property type="entry name" value="L-AMINOADIPATE-SEMIALDEHYDE DEHYDROGENASE-PHOSPHOPANTETHEINYL TRANSFERASE"/>
    <property type="match status" value="1"/>
</dbReference>
<dbReference type="PANTHER" id="PTHR12215">
    <property type="entry name" value="PHOSPHOPANTETHEINE TRANSFERASE"/>
    <property type="match status" value="1"/>
</dbReference>
<dbReference type="Pfam" id="PF01648">
    <property type="entry name" value="ACPS"/>
    <property type="match status" value="1"/>
</dbReference>
<dbReference type="SUPFAM" id="SSF56214">
    <property type="entry name" value="4'-phosphopantetheinyl transferase"/>
    <property type="match status" value="1"/>
</dbReference>
<keyword id="KW-0963">Cytoplasm</keyword>
<keyword id="KW-0275">Fatty acid biosynthesis</keyword>
<keyword id="KW-0276">Fatty acid metabolism</keyword>
<keyword id="KW-0444">Lipid biosynthesis</keyword>
<keyword id="KW-0443">Lipid metabolism</keyword>
<keyword id="KW-0460">Magnesium</keyword>
<keyword id="KW-0479">Metal-binding</keyword>
<keyword id="KW-1185">Reference proteome</keyword>
<keyword id="KW-0808">Transferase</keyword>
<reference key="1">
    <citation type="journal article" date="2011" name="PLoS Genet.">
        <title>The evolution of host specialization in the vertebrate gut symbiont Lactobacillus reuteri.</title>
        <authorList>
            <person name="Frese S.A."/>
            <person name="Benson A.K."/>
            <person name="Tannock G.W."/>
            <person name="Loach D.M."/>
            <person name="Kim J."/>
            <person name="Zhang M."/>
            <person name="Oh P.L."/>
            <person name="Heng N.C."/>
            <person name="Patil P.B."/>
            <person name="Juge N."/>
            <person name="Mackenzie D.A."/>
            <person name="Pearson B.M."/>
            <person name="Lapidus A."/>
            <person name="Dalin E."/>
            <person name="Tice H."/>
            <person name="Goltsman E."/>
            <person name="Land M."/>
            <person name="Hauser L."/>
            <person name="Ivanova N."/>
            <person name="Kyrpides N.C."/>
            <person name="Walter J."/>
        </authorList>
    </citation>
    <scope>NUCLEOTIDE SEQUENCE [LARGE SCALE GENOMIC DNA]</scope>
    <source>
        <strain>DSM 20016</strain>
    </source>
</reference>